<proteinExistence type="inferred from homology"/>
<evidence type="ECO:0000255" key="1">
    <source>
        <dbReference type="HAMAP-Rule" id="MF_00113"/>
    </source>
</evidence>
<feature type="chain" id="PRO_1000119152" description="S-adenosylmethionine:tRNA ribosyltransferase-isomerase">
    <location>
        <begin position="1"/>
        <end position="356"/>
    </location>
</feature>
<accession>B7L638</accession>
<keyword id="KW-0963">Cytoplasm</keyword>
<keyword id="KW-0671">Queuosine biosynthesis</keyword>
<keyword id="KW-1185">Reference proteome</keyword>
<keyword id="KW-0949">S-adenosyl-L-methionine</keyword>
<keyword id="KW-0808">Transferase</keyword>
<dbReference type="EC" id="2.4.99.17" evidence="1"/>
<dbReference type="EMBL" id="CU928145">
    <property type="protein sequence ID" value="CAU96288.1"/>
    <property type="molecule type" value="Genomic_DNA"/>
</dbReference>
<dbReference type="RefSeq" id="WP_001266492.1">
    <property type="nucleotide sequence ID" value="NC_011748.1"/>
</dbReference>
<dbReference type="SMR" id="B7L638"/>
<dbReference type="GeneID" id="75170422"/>
<dbReference type="KEGG" id="eck:EC55989_0414"/>
<dbReference type="HOGENOM" id="CLU_039110_1_0_6"/>
<dbReference type="UniPathway" id="UPA00392"/>
<dbReference type="Proteomes" id="UP000000746">
    <property type="component" value="Chromosome"/>
</dbReference>
<dbReference type="GO" id="GO:0005737">
    <property type="term" value="C:cytoplasm"/>
    <property type="evidence" value="ECO:0007669"/>
    <property type="project" value="UniProtKB-SubCell"/>
</dbReference>
<dbReference type="GO" id="GO:0051075">
    <property type="term" value="F:S-adenosylmethionine:tRNA ribosyltransferase-isomerase activity"/>
    <property type="evidence" value="ECO:0007669"/>
    <property type="project" value="UniProtKB-EC"/>
</dbReference>
<dbReference type="GO" id="GO:0008616">
    <property type="term" value="P:queuosine biosynthetic process"/>
    <property type="evidence" value="ECO:0007669"/>
    <property type="project" value="UniProtKB-UniRule"/>
</dbReference>
<dbReference type="GO" id="GO:0002099">
    <property type="term" value="P:tRNA wobble guanine modification"/>
    <property type="evidence" value="ECO:0007669"/>
    <property type="project" value="TreeGrafter"/>
</dbReference>
<dbReference type="FunFam" id="2.40.10.240:FF:000001">
    <property type="entry name" value="S-adenosylmethionine:tRNA ribosyltransferase-isomerase"/>
    <property type="match status" value="1"/>
</dbReference>
<dbReference type="FunFam" id="3.40.1780.10:FF:000001">
    <property type="entry name" value="S-adenosylmethionine:tRNA ribosyltransferase-isomerase"/>
    <property type="match status" value="1"/>
</dbReference>
<dbReference type="Gene3D" id="2.40.10.240">
    <property type="entry name" value="QueA-like"/>
    <property type="match status" value="1"/>
</dbReference>
<dbReference type="Gene3D" id="3.40.1780.10">
    <property type="entry name" value="QueA-like"/>
    <property type="match status" value="1"/>
</dbReference>
<dbReference type="HAMAP" id="MF_00113">
    <property type="entry name" value="QueA"/>
    <property type="match status" value="1"/>
</dbReference>
<dbReference type="InterPro" id="IPR003699">
    <property type="entry name" value="QueA"/>
</dbReference>
<dbReference type="InterPro" id="IPR042118">
    <property type="entry name" value="QueA_dom1"/>
</dbReference>
<dbReference type="InterPro" id="IPR042119">
    <property type="entry name" value="QueA_dom2"/>
</dbReference>
<dbReference type="InterPro" id="IPR036100">
    <property type="entry name" value="QueA_sf"/>
</dbReference>
<dbReference type="NCBIfam" id="NF001140">
    <property type="entry name" value="PRK00147.1"/>
    <property type="match status" value="1"/>
</dbReference>
<dbReference type="NCBIfam" id="TIGR00113">
    <property type="entry name" value="queA"/>
    <property type="match status" value="1"/>
</dbReference>
<dbReference type="PANTHER" id="PTHR30307">
    <property type="entry name" value="S-ADENOSYLMETHIONINE:TRNA RIBOSYLTRANSFERASE-ISOMERASE"/>
    <property type="match status" value="1"/>
</dbReference>
<dbReference type="PANTHER" id="PTHR30307:SF0">
    <property type="entry name" value="S-ADENOSYLMETHIONINE:TRNA RIBOSYLTRANSFERASE-ISOMERASE"/>
    <property type="match status" value="1"/>
</dbReference>
<dbReference type="Pfam" id="PF02547">
    <property type="entry name" value="Queuosine_synth"/>
    <property type="match status" value="1"/>
</dbReference>
<dbReference type="SUPFAM" id="SSF111337">
    <property type="entry name" value="QueA-like"/>
    <property type="match status" value="1"/>
</dbReference>
<organism>
    <name type="scientific">Escherichia coli (strain 55989 / EAEC)</name>
    <dbReference type="NCBI Taxonomy" id="585055"/>
    <lineage>
        <taxon>Bacteria</taxon>
        <taxon>Pseudomonadati</taxon>
        <taxon>Pseudomonadota</taxon>
        <taxon>Gammaproteobacteria</taxon>
        <taxon>Enterobacterales</taxon>
        <taxon>Enterobacteriaceae</taxon>
        <taxon>Escherichia</taxon>
    </lineage>
</organism>
<gene>
    <name evidence="1" type="primary">queA</name>
    <name type="ordered locus">EC55989_0414</name>
</gene>
<name>QUEA_ECO55</name>
<reference key="1">
    <citation type="journal article" date="2009" name="PLoS Genet.">
        <title>Organised genome dynamics in the Escherichia coli species results in highly diverse adaptive paths.</title>
        <authorList>
            <person name="Touchon M."/>
            <person name="Hoede C."/>
            <person name="Tenaillon O."/>
            <person name="Barbe V."/>
            <person name="Baeriswyl S."/>
            <person name="Bidet P."/>
            <person name="Bingen E."/>
            <person name="Bonacorsi S."/>
            <person name="Bouchier C."/>
            <person name="Bouvet O."/>
            <person name="Calteau A."/>
            <person name="Chiapello H."/>
            <person name="Clermont O."/>
            <person name="Cruveiller S."/>
            <person name="Danchin A."/>
            <person name="Diard M."/>
            <person name="Dossat C."/>
            <person name="Karoui M.E."/>
            <person name="Frapy E."/>
            <person name="Garry L."/>
            <person name="Ghigo J.M."/>
            <person name="Gilles A.M."/>
            <person name="Johnson J."/>
            <person name="Le Bouguenec C."/>
            <person name="Lescat M."/>
            <person name="Mangenot S."/>
            <person name="Martinez-Jehanne V."/>
            <person name="Matic I."/>
            <person name="Nassif X."/>
            <person name="Oztas S."/>
            <person name="Petit M.A."/>
            <person name="Pichon C."/>
            <person name="Rouy Z."/>
            <person name="Ruf C.S."/>
            <person name="Schneider D."/>
            <person name="Tourret J."/>
            <person name="Vacherie B."/>
            <person name="Vallenet D."/>
            <person name="Medigue C."/>
            <person name="Rocha E.P.C."/>
            <person name="Denamur E."/>
        </authorList>
    </citation>
    <scope>NUCLEOTIDE SEQUENCE [LARGE SCALE GENOMIC DNA]</scope>
    <source>
        <strain>55989 / EAEC</strain>
    </source>
</reference>
<protein>
    <recommendedName>
        <fullName evidence="1">S-adenosylmethionine:tRNA ribosyltransferase-isomerase</fullName>
        <ecNumber evidence="1">2.4.99.17</ecNumber>
    </recommendedName>
    <alternativeName>
        <fullName evidence="1">Queuosine biosynthesis protein QueA</fullName>
    </alternativeName>
</protein>
<sequence>MRVTDFSFELPESLIAHYPMPERSSCRLLSLDGPTGALTHGTFTDLLDKLNPGDLLVFNNTRVIPARLFGRKASGGKIEVLVERMLDDKRILAHIRASKAPKPGAELLLGDDESINATMTARHGALFEVEFNDDRSVLDILNSIGHMPLPPYIDRPDEDADRELYQTVYSEKPGAVAAPTAGLHFDEPLLEKLRAKGVEMAFVTLHVGAGTFQPVRVDTIEDHIMHSEYAEVPQDVVDAVLAAKARGNRVIAVGTTSVRSLESAAQAAKNDLIEPFFDDTQIFIYPGFQYKVVDALVTNFHLPESTLIMLVSAFAGYQHTMNAYKAAVEEKYRFFSYGDAMFITYNPQAINERVGE</sequence>
<comment type="function">
    <text evidence="1">Transfers and isomerizes the ribose moiety from AdoMet to the 7-aminomethyl group of 7-deazaguanine (preQ1-tRNA) to give epoxyqueuosine (oQ-tRNA).</text>
</comment>
<comment type="catalytic activity">
    <reaction evidence="1">
        <text>7-aminomethyl-7-carbaguanosine(34) in tRNA + S-adenosyl-L-methionine = epoxyqueuosine(34) in tRNA + adenine + L-methionine + 2 H(+)</text>
        <dbReference type="Rhea" id="RHEA:32155"/>
        <dbReference type="Rhea" id="RHEA-COMP:10342"/>
        <dbReference type="Rhea" id="RHEA-COMP:18582"/>
        <dbReference type="ChEBI" id="CHEBI:15378"/>
        <dbReference type="ChEBI" id="CHEBI:16708"/>
        <dbReference type="ChEBI" id="CHEBI:57844"/>
        <dbReference type="ChEBI" id="CHEBI:59789"/>
        <dbReference type="ChEBI" id="CHEBI:82833"/>
        <dbReference type="ChEBI" id="CHEBI:194443"/>
        <dbReference type="EC" id="2.4.99.17"/>
    </reaction>
</comment>
<comment type="pathway">
    <text evidence="1">tRNA modification; tRNA-queuosine biosynthesis.</text>
</comment>
<comment type="subunit">
    <text evidence="1">Monomer.</text>
</comment>
<comment type="subcellular location">
    <subcellularLocation>
        <location evidence="1">Cytoplasm</location>
    </subcellularLocation>
</comment>
<comment type="similarity">
    <text evidence="1">Belongs to the QueA family.</text>
</comment>